<protein>
    <recommendedName>
        <fullName evidence="2">Elongation factor Tu</fullName>
        <shortName evidence="2">EF-Tu</shortName>
        <ecNumber evidence="2">3.6.5.3</ecNumber>
    </recommendedName>
</protein>
<reference key="1">
    <citation type="journal article" date="2003" name="Science">
        <title>Genome of Geobacter sulfurreducens: metal reduction in subsurface environments.</title>
        <authorList>
            <person name="Methe B.A."/>
            <person name="Nelson K.E."/>
            <person name="Eisen J.A."/>
            <person name="Paulsen I.T."/>
            <person name="Nelson W.C."/>
            <person name="Heidelberg J.F."/>
            <person name="Wu D."/>
            <person name="Wu M."/>
            <person name="Ward N.L."/>
            <person name="Beanan M.J."/>
            <person name="Dodson R.J."/>
            <person name="Madupu R."/>
            <person name="Brinkac L.M."/>
            <person name="Daugherty S.C."/>
            <person name="DeBoy R.T."/>
            <person name="Durkin A.S."/>
            <person name="Gwinn M.L."/>
            <person name="Kolonay J.F."/>
            <person name="Sullivan S.A."/>
            <person name="Haft D.H."/>
            <person name="Selengut J."/>
            <person name="Davidsen T.M."/>
            <person name="Zafar N."/>
            <person name="White O."/>
            <person name="Tran B."/>
            <person name="Romero C."/>
            <person name="Forberger H.A."/>
            <person name="Weidman J.F."/>
            <person name="Khouri H.M."/>
            <person name="Feldblyum T.V."/>
            <person name="Utterback T.R."/>
            <person name="Van Aken S.E."/>
            <person name="Lovley D.R."/>
            <person name="Fraser C.M."/>
        </authorList>
    </citation>
    <scope>NUCLEOTIDE SEQUENCE [LARGE SCALE GENOMIC DNA]</scope>
    <source>
        <strain>ATCC 51573 / DSM 12127 / PCA</strain>
    </source>
</reference>
<gene>
    <name evidence="2" type="primary">tuf1</name>
    <name type="ordered locus">GSU2859</name>
</gene>
<gene>
    <name evidence="2" type="primary">tuf2</name>
    <name type="ordered locus">GSU2871</name>
</gene>
<keyword id="KW-0963">Cytoplasm</keyword>
<keyword id="KW-0251">Elongation factor</keyword>
<keyword id="KW-0342">GTP-binding</keyword>
<keyword id="KW-0378">Hydrolase</keyword>
<keyword id="KW-0460">Magnesium</keyword>
<keyword id="KW-0479">Metal-binding</keyword>
<keyword id="KW-0547">Nucleotide-binding</keyword>
<keyword id="KW-0648">Protein biosynthesis</keyword>
<keyword id="KW-1185">Reference proteome</keyword>
<name>EFTU_GEOSL</name>
<comment type="function">
    <text evidence="2">GTP hydrolase that promotes the GTP-dependent binding of aminoacyl-tRNA to the A-site of ribosomes during protein biosynthesis.</text>
</comment>
<comment type="catalytic activity">
    <reaction evidence="2">
        <text>GTP + H2O = GDP + phosphate + H(+)</text>
        <dbReference type="Rhea" id="RHEA:19669"/>
        <dbReference type="ChEBI" id="CHEBI:15377"/>
        <dbReference type="ChEBI" id="CHEBI:15378"/>
        <dbReference type="ChEBI" id="CHEBI:37565"/>
        <dbReference type="ChEBI" id="CHEBI:43474"/>
        <dbReference type="ChEBI" id="CHEBI:58189"/>
        <dbReference type="EC" id="3.6.5.3"/>
    </reaction>
    <physiologicalReaction direction="left-to-right" evidence="2">
        <dbReference type="Rhea" id="RHEA:19670"/>
    </physiologicalReaction>
</comment>
<comment type="subunit">
    <text evidence="2">Monomer.</text>
</comment>
<comment type="subcellular location">
    <subcellularLocation>
        <location evidence="2">Cytoplasm</location>
    </subcellularLocation>
</comment>
<comment type="similarity">
    <text evidence="2">Belongs to the TRAFAC class translation factor GTPase superfamily. Classic translation factor GTPase family. EF-Tu/EF-1A subfamily.</text>
</comment>
<feature type="chain" id="PRO_0000337395" description="Elongation factor Tu">
    <location>
        <begin position="1"/>
        <end position="396"/>
    </location>
</feature>
<feature type="domain" description="tr-type G">
    <location>
        <begin position="10"/>
        <end position="206"/>
    </location>
</feature>
<feature type="region of interest" description="G1" evidence="1">
    <location>
        <begin position="19"/>
        <end position="26"/>
    </location>
</feature>
<feature type="region of interest" description="G2" evidence="1">
    <location>
        <begin position="60"/>
        <end position="64"/>
    </location>
</feature>
<feature type="region of interest" description="G3" evidence="1">
    <location>
        <begin position="81"/>
        <end position="84"/>
    </location>
</feature>
<feature type="region of interest" description="G4" evidence="1">
    <location>
        <begin position="136"/>
        <end position="139"/>
    </location>
</feature>
<feature type="region of interest" description="G5" evidence="1">
    <location>
        <begin position="174"/>
        <end position="176"/>
    </location>
</feature>
<feature type="binding site" evidence="2">
    <location>
        <begin position="19"/>
        <end position="26"/>
    </location>
    <ligand>
        <name>GTP</name>
        <dbReference type="ChEBI" id="CHEBI:37565"/>
    </ligand>
</feature>
<feature type="binding site" evidence="2">
    <location>
        <position position="26"/>
    </location>
    <ligand>
        <name>Mg(2+)</name>
        <dbReference type="ChEBI" id="CHEBI:18420"/>
    </ligand>
</feature>
<feature type="binding site" evidence="2">
    <location>
        <begin position="81"/>
        <end position="85"/>
    </location>
    <ligand>
        <name>GTP</name>
        <dbReference type="ChEBI" id="CHEBI:37565"/>
    </ligand>
</feature>
<feature type="binding site" evidence="2">
    <location>
        <begin position="136"/>
        <end position="139"/>
    </location>
    <ligand>
        <name>GTP</name>
        <dbReference type="ChEBI" id="CHEBI:37565"/>
    </ligand>
</feature>
<dbReference type="EC" id="3.6.5.3" evidence="2"/>
<dbReference type="EMBL" id="AE017180">
    <property type="protein sequence ID" value="AAR36252.1"/>
    <property type="molecule type" value="Genomic_DNA"/>
</dbReference>
<dbReference type="EMBL" id="AE017180">
    <property type="protein sequence ID" value="AAR36263.1"/>
    <property type="molecule type" value="Genomic_DNA"/>
</dbReference>
<dbReference type="RefSeq" id="NP_953902.1">
    <property type="nucleotide sequence ID" value="NC_002939.5"/>
</dbReference>
<dbReference type="RefSeq" id="NP_953913.1">
    <property type="nucleotide sequence ID" value="NC_002939.5"/>
</dbReference>
<dbReference type="SMR" id="Q748X8"/>
<dbReference type="FunCoup" id="Q748X8">
    <property type="interactions" value="645"/>
</dbReference>
<dbReference type="STRING" id="243231.GSU2859"/>
<dbReference type="EnsemblBacteria" id="AAR36252">
    <property type="protein sequence ID" value="AAR36252"/>
    <property type="gene ID" value="GSU2859"/>
</dbReference>
<dbReference type="EnsemblBacteria" id="AAR36263">
    <property type="protein sequence ID" value="AAR36263"/>
    <property type="gene ID" value="GSU2871"/>
</dbReference>
<dbReference type="KEGG" id="gsu:GSU2859"/>
<dbReference type="KEGG" id="gsu:GSU2871"/>
<dbReference type="PATRIC" id="fig|243231.5.peg.2885"/>
<dbReference type="eggNOG" id="COG0050">
    <property type="taxonomic scope" value="Bacteria"/>
</dbReference>
<dbReference type="HOGENOM" id="CLU_007265_0_0_7"/>
<dbReference type="InParanoid" id="Q748X8"/>
<dbReference type="OrthoDB" id="9803139at2"/>
<dbReference type="Proteomes" id="UP000000577">
    <property type="component" value="Chromosome"/>
</dbReference>
<dbReference type="GO" id="GO:0005737">
    <property type="term" value="C:cytoplasm"/>
    <property type="evidence" value="ECO:0007669"/>
    <property type="project" value="UniProtKB-SubCell"/>
</dbReference>
<dbReference type="GO" id="GO:0005525">
    <property type="term" value="F:GTP binding"/>
    <property type="evidence" value="ECO:0007669"/>
    <property type="project" value="UniProtKB-UniRule"/>
</dbReference>
<dbReference type="GO" id="GO:0003924">
    <property type="term" value="F:GTPase activity"/>
    <property type="evidence" value="ECO:0007669"/>
    <property type="project" value="InterPro"/>
</dbReference>
<dbReference type="GO" id="GO:0003746">
    <property type="term" value="F:translation elongation factor activity"/>
    <property type="evidence" value="ECO:0000318"/>
    <property type="project" value="GO_Central"/>
</dbReference>
<dbReference type="GO" id="GO:0006414">
    <property type="term" value="P:translational elongation"/>
    <property type="evidence" value="ECO:0000318"/>
    <property type="project" value="GO_Central"/>
</dbReference>
<dbReference type="CDD" id="cd01884">
    <property type="entry name" value="EF_Tu"/>
    <property type="match status" value="1"/>
</dbReference>
<dbReference type="CDD" id="cd03697">
    <property type="entry name" value="EFTU_II"/>
    <property type="match status" value="1"/>
</dbReference>
<dbReference type="CDD" id="cd03707">
    <property type="entry name" value="EFTU_III"/>
    <property type="match status" value="1"/>
</dbReference>
<dbReference type="FunFam" id="2.40.30.10:FF:000001">
    <property type="entry name" value="Elongation factor Tu"/>
    <property type="match status" value="1"/>
</dbReference>
<dbReference type="FunFam" id="3.40.50.300:FF:000003">
    <property type="entry name" value="Elongation factor Tu"/>
    <property type="match status" value="1"/>
</dbReference>
<dbReference type="Gene3D" id="3.40.50.300">
    <property type="entry name" value="P-loop containing nucleotide triphosphate hydrolases"/>
    <property type="match status" value="1"/>
</dbReference>
<dbReference type="Gene3D" id="2.40.30.10">
    <property type="entry name" value="Translation factors"/>
    <property type="match status" value="2"/>
</dbReference>
<dbReference type="HAMAP" id="MF_00118_B">
    <property type="entry name" value="EF_Tu_B"/>
    <property type="match status" value="1"/>
</dbReference>
<dbReference type="InterPro" id="IPR041709">
    <property type="entry name" value="EF-Tu_GTP-bd"/>
</dbReference>
<dbReference type="InterPro" id="IPR050055">
    <property type="entry name" value="EF-Tu_GTPase"/>
</dbReference>
<dbReference type="InterPro" id="IPR004161">
    <property type="entry name" value="EFTu-like_2"/>
</dbReference>
<dbReference type="InterPro" id="IPR033720">
    <property type="entry name" value="EFTU_2"/>
</dbReference>
<dbReference type="InterPro" id="IPR031157">
    <property type="entry name" value="G_TR_CS"/>
</dbReference>
<dbReference type="InterPro" id="IPR027417">
    <property type="entry name" value="P-loop_NTPase"/>
</dbReference>
<dbReference type="InterPro" id="IPR005225">
    <property type="entry name" value="Small_GTP-bd"/>
</dbReference>
<dbReference type="InterPro" id="IPR000795">
    <property type="entry name" value="T_Tr_GTP-bd_dom"/>
</dbReference>
<dbReference type="InterPro" id="IPR009000">
    <property type="entry name" value="Transl_B-barrel_sf"/>
</dbReference>
<dbReference type="InterPro" id="IPR009001">
    <property type="entry name" value="Transl_elong_EF1A/Init_IF2_C"/>
</dbReference>
<dbReference type="InterPro" id="IPR004541">
    <property type="entry name" value="Transl_elong_EFTu/EF1A_bac/org"/>
</dbReference>
<dbReference type="InterPro" id="IPR004160">
    <property type="entry name" value="Transl_elong_EFTu/EF1A_C"/>
</dbReference>
<dbReference type="NCBIfam" id="TIGR00485">
    <property type="entry name" value="EF-Tu"/>
    <property type="match status" value="1"/>
</dbReference>
<dbReference type="NCBIfam" id="NF000766">
    <property type="entry name" value="PRK00049.1"/>
    <property type="match status" value="1"/>
</dbReference>
<dbReference type="NCBIfam" id="NF009372">
    <property type="entry name" value="PRK12735.1"/>
    <property type="match status" value="1"/>
</dbReference>
<dbReference type="NCBIfam" id="NF009373">
    <property type="entry name" value="PRK12736.1"/>
    <property type="match status" value="1"/>
</dbReference>
<dbReference type="NCBIfam" id="TIGR00231">
    <property type="entry name" value="small_GTP"/>
    <property type="match status" value="1"/>
</dbReference>
<dbReference type="PANTHER" id="PTHR43721:SF22">
    <property type="entry name" value="ELONGATION FACTOR TU, MITOCHONDRIAL"/>
    <property type="match status" value="1"/>
</dbReference>
<dbReference type="PANTHER" id="PTHR43721">
    <property type="entry name" value="ELONGATION FACTOR TU-RELATED"/>
    <property type="match status" value="1"/>
</dbReference>
<dbReference type="Pfam" id="PF00009">
    <property type="entry name" value="GTP_EFTU"/>
    <property type="match status" value="1"/>
</dbReference>
<dbReference type="Pfam" id="PF03144">
    <property type="entry name" value="GTP_EFTU_D2"/>
    <property type="match status" value="1"/>
</dbReference>
<dbReference type="Pfam" id="PF03143">
    <property type="entry name" value="GTP_EFTU_D3"/>
    <property type="match status" value="1"/>
</dbReference>
<dbReference type="PRINTS" id="PR00315">
    <property type="entry name" value="ELONGATNFCT"/>
</dbReference>
<dbReference type="SUPFAM" id="SSF50465">
    <property type="entry name" value="EF-Tu/eEF-1alpha/eIF2-gamma C-terminal domain"/>
    <property type="match status" value="1"/>
</dbReference>
<dbReference type="SUPFAM" id="SSF52540">
    <property type="entry name" value="P-loop containing nucleoside triphosphate hydrolases"/>
    <property type="match status" value="1"/>
</dbReference>
<dbReference type="SUPFAM" id="SSF50447">
    <property type="entry name" value="Translation proteins"/>
    <property type="match status" value="1"/>
</dbReference>
<dbReference type="PROSITE" id="PS00301">
    <property type="entry name" value="G_TR_1"/>
    <property type="match status" value="1"/>
</dbReference>
<dbReference type="PROSITE" id="PS51722">
    <property type="entry name" value="G_TR_2"/>
    <property type="match status" value="1"/>
</dbReference>
<accession>Q748X8</accession>
<proteinExistence type="inferred from homology"/>
<sequence>MAKAKFERTKPHVNIGTIGHVDHGKTTLTAAITKVLAERGQAEFRGFDQIDNAPEERERGITIATSHVEYETEKRHYAHVDCPGHADYVKNMITGAAQMDGAILVVSAADGPMPQTREHILLARQVGVPYIVVFLNKADMVDDEELLELVELEIRELLSSYDFPGDDIPIIKGSALKGLNGDKDELGEEAILKLMEAVDNYIPEPERAVDKPFLMPVEDVFSISGRGTVATGRVERGIVKVGEEVEIVGIKATAKTTVTGVEMFRKLLDEGRAGDNIGALLRGVKREDIERGQVLAKPGSITPHTKFKAEAYILTKEEGGRHTPFFNGYRPQFYFRTTDVTGVVDLPAGTEMVMPGDNVAVTINLITPIAMDEGLRFAIREGGRTVGAGVVSSIIE</sequence>
<evidence type="ECO:0000250" key="1"/>
<evidence type="ECO:0000255" key="2">
    <source>
        <dbReference type="HAMAP-Rule" id="MF_00118"/>
    </source>
</evidence>
<organism>
    <name type="scientific">Geobacter sulfurreducens (strain ATCC 51573 / DSM 12127 / PCA)</name>
    <dbReference type="NCBI Taxonomy" id="243231"/>
    <lineage>
        <taxon>Bacteria</taxon>
        <taxon>Pseudomonadati</taxon>
        <taxon>Thermodesulfobacteriota</taxon>
        <taxon>Desulfuromonadia</taxon>
        <taxon>Geobacterales</taxon>
        <taxon>Geobacteraceae</taxon>
        <taxon>Geobacter</taxon>
    </lineage>
</organism>